<gene>
    <name evidence="1" type="primary">glpK</name>
    <name type="ordered locus">BC_1035</name>
</gene>
<dbReference type="EC" id="2.7.1.30" evidence="1"/>
<dbReference type="EMBL" id="AE016877">
    <property type="protein sequence ID" value="AAP08022.1"/>
    <property type="molecule type" value="Genomic_DNA"/>
</dbReference>
<dbReference type="RefSeq" id="NP_830821.1">
    <property type="nucleotide sequence ID" value="NC_004722.1"/>
</dbReference>
<dbReference type="RefSeq" id="WP_000760011.1">
    <property type="nucleotide sequence ID" value="NZ_CP138336.1"/>
</dbReference>
<dbReference type="SMR" id="Q81GZ2"/>
<dbReference type="STRING" id="226900.BC_1035"/>
<dbReference type="KEGG" id="bce:BC1035"/>
<dbReference type="PATRIC" id="fig|226900.8.peg.993"/>
<dbReference type="HOGENOM" id="CLU_009281_2_3_9"/>
<dbReference type="OrthoDB" id="9805576at2"/>
<dbReference type="UniPathway" id="UPA00618">
    <property type="reaction ID" value="UER00672"/>
</dbReference>
<dbReference type="Proteomes" id="UP000001417">
    <property type="component" value="Chromosome"/>
</dbReference>
<dbReference type="GO" id="GO:0005829">
    <property type="term" value="C:cytosol"/>
    <property type="evidence" value="ECO:0000318"/>
    <property type="project" value="GO_Central"/>
</dbReference>
<dbReference type="GO" id="GO:0005524">
    <property type="term" value="F:ATP binding"/>
    <property type="evidence" value="ECO:0007669"/>
    <property type="project" value="UniProtKB-UniRule"/>
</dbReference>
<dbReference type="GO" id="GO:0004370">
    <property type="term" value="F:glycerol kinase activity"/>
    <property type="evidence" value="ECO:0000250"/>
    <property type="project" value="UniProtKB"/>
</dbReference>
<dbReference type="GO" id="GO:0019563">
    <property type="term" value="P:glycerol catabolic process"/>
    <property type="evidence" value="ECO:0000318"/>
    <property type="project" value="GO_Central"/>
</dbReference>
<dbReference type="GO" id="GO:0006071">
    <property type="term" value="P:glycerol metabolic process"/>
    <property type="evidence" value="ECO:0000250"/>
    <property type="project" value="UniProtKB"/>
</dbReference>
<dbReference type="GO" id="GO:0006072">
    <property type="term" value="P:glycerol-3-phosphate metabolic process"/>
    <property type="evidence" value="ECO:0007669"/>
    <property type="project" value="InterPro"/>
</dbReference>
<dbReference type="CDD" id="cd07786">
    <property type="entry name" value="FGGY_EcGK_like"/>
    <property type="match status" value="1"/>
</dbReference>
<dbReference type="FunFam" id="3.30.420.40:FF:000007">
    <property type="entry name" value="Glycerol kinase"/>
    <property type="match status" value="1"/>
</dbReference>
<dbReference type="FunFam" id="3.30.420.40:FF:000008">
    <property type="entry name" value="Glycerol kinase"/>
    <property type="match status" value="1"/>
</dbReference>
<dbReference type="Gene3D" id="3.30.420.40">
    <property type="match status" value="2"/>
</dbReference>
<dbReference type="HAMAP" id="MF_00186">
    <property type="entry name" value="Glycerol_kin"/>
    <property type="match status" value="1"/>
</dbReference>
<dbReference type="InterPro" id="IPR043129">
    <property type="entry name" value="ATPase_NBD"/>
</dbReference>
<dbReference type="InterPro" id="IPR000577">
    <property type="entry name" value="Carb_kinase_FGGY"/>
</dbReference>
<dbReference type="InterPro" id="IPR018483">
    <property type="entry name" value="Carb_kinase_FGGY_CS"/>
</dbReference>
<dbReference type="InterPro" id="IPR018485">
    <property type="entry name" value="FGGY_C"/>
</dbReference>
<dbReference type="InterPro" id="IPR018484">
    <property type="entry name" value="FGGY_N"/>
</dbReference>
<dbReference type="InterPro" id="IPR005999">
    <property type="entry name" value="Glycerol_kin"/>
</dbReference>
<dbReference type="NCBIfam" id="TIGR01311">
    <property type="entry name" value="glycerol_kin"/>
    <property type="match status" value="1"/>
</dbReference>
<dbReference type="NCBIfam" id="NF000756">
    <property type="entry name" value="PRK00047.1"/>
    <property type="match status" value="1"/>
</dbReference>
<dbReference type="PANTHER" id="PTHR10196:SF69">
    <property type="entry name" value="GLYCEROL KINASE"/>
    <property type="match status" value="1"/>
</dbReference>
<dbReference type="PANTHER" id="PTHR10196">
    <property type="entry name" value="SUGAR KINASE"/>
    <property type="match status" value="1"/>
</dbReference>
<dbReference type="Pfam" id="PF02782">
    <property type="entry name" value="FGGY_C"/>
    <property type="match status" value="1"/>
</dbReference>
<dbReference type="Pfam" id="PF00370">
    <property type="entry name" value="FGGY_N"/>
    <property type="match status" value="1"/>
</dbReference>
<dbReference type="PIRSF" id="PIRSF000538">
    <property type="entry name" value="GlpK"/>
    <property type="match status" value="1"/>
</dbReference>
<dbReference type="SUPFAM" id="SSF53067">
    <property type="entry name" value="Actin-like ATPase domain"/>
    <property type="match status" value="2"/>
</dbReference>
<dbReference type="PROSITE" id="PS00933">
    <property type="entry name" value="FGGY_KINASES_1"/>
    <property type="match status" value="1"/>
</dbReference>
<dbReference type="PROSITE" id="PS00445">
    <property type="entry name" value="FGGY_KINASES_2"/>
    <property type="match status" value="1"/>
</dbReference>
<name>GLPK_BACCR</name>
<feature type="chain" id="PRO_0000059432" description="Glycerol kinase">
    <location>
        <begin position="1"/>
        <end position="496"/>
    </location>
</feature>
<feature type="binding site" evidence="1">
    <location>
        <position position="12"/>
    </location>
    <ligand>
        <name>ADP</name>
        <dbReference type="ChEBI" id="CHEBI:456216"/>
    </ligand>
</feature>
<feature type="binding site" evidence="1">
    <location>
        <position position="12"/>
    </location>
    <ligand>
        <name>ATP</name>
        <dbReference type="ChEBI" id="CHEBI:30616"/>
    </ligand>
</feature>
<feature type="binding site" evidence="1">
    <location>
        <position position="12"/>
    </location>
    <ligand>
        <name>sn-glycerol 3-phosphate</name>
        <dbReference type="ChEBI" id="CHEBI:57597"/>
    </ligand>
</feature>
<feature type="binding site" evidence="1">
    <location>
        <position position="13"/>
    </location>
    <ligand>
        <name>ATP</name>
        <dbReference type="ChEBI" id="CHEBI:30616"/>
    </ligand>
</feature>
<feature type="binding site" evidence="1">
    <location>
        <position position="14"/>
    </location>
    <ligand>
        <name>ATP</name>
        <dbReference type="ChEBI" id="CHEBI:30616"/>
    </ligand>
</feature>
<feature type="binding site" evidence="1">
    <location>
        <position position="16"/>
    </location>
    <ligand>
        <name>ADP</name>
        <dbReference type="ChEBI" id="CHEBI:456216"/>
    </ligand>
</feature>
<feature type="binding site" evidence="1">
    <location>
        <position position="82"/>
    </location>
    <ligand>
        <name>glycerol</name>
        <dbReference type="ChEBI" id="CHEBI:17754"/>
    </ligand>
</feature>
<feature type="binding site" evidence="1">
    <location>
        <position position="82"/>
    </location>
    <ligand>
        <name>sn-glycerol 3-phosphate</name>
        <dbReference type="ChEBI" id="CHEBI:57597"/>
    </ligand>
</feature>
<feature type="binding site" evidence="1">
    <location>
        <position position="83"/>
    </location>
    <ligand>
        <name>glycerol</name>
        <dbReference type="ChEBI" id="CHEBI:17754"/>
    </ligand>
</feature>
<feature type="binding site" evidence="1">
    <location>
        <position position="83"/>
    </location>
    <ligand>
        <name>sn-glycerol 3-phosphate</name>
        <dbReference type="ChEBI" id="CHEBI:57597"/>
    </ligand>
</feature>
<feature type="binding site" evidence="1">
    <location>
        <position position="134"/>
    </location>
    <ligand>
        <name>glycerol</name>
        <dbReference type="ChEBI" id="CHEBI:17754"/>
    </ligand>
</feature>
<feature type="binding site" evidence="1">
    <location>
        <position position="134"/>
    </location>
    <ligand>
        <name>sn-glycerol 3-phosphate</name>
        <dbReference type="ChEBI" id="CHEBI:57597"/>
    </ligand>
</feature>
<feature type="binding site" evidence="1">
    <location>
        <position position="244"/>
    </location>
    <ligand>
        <name>glycerol</name>
        <dbReference type="ChEBI" id="CHEBI:17754"/>
    </ligand>
</feature>
<feature type="binding site" evidence="1">
    <location>
        <position position="244"/>
    </location>
    <ligand>
        <name>sn-glycerol 3-phosphate</name>
        <dbReference type="ChEBI" id="CHEBI:57597"/>
    </ligand>
</feature>
<feature type="binding site" evidence="1">
    <location>
        <position position="245"/>
    </location>
    <ligand>
        <name>glycerol</name>
        <dbReference type="ChEBI" id="CHEBI:17754"/>
    </ligand>
</feature>
<feature type="binding site" evidence="1">
    <location>
        <position position="266"/>
    </location>
    <ligand>
        <name>ADP</name>
        <dbReference type="ChEBI" id="CHEBI:456216"/>
    </ligand>
</feature>
<feature type="binding site" evidence="1">
    <location>
        <position position="266"/>
    </location>
    <ligand>
        <name>ATP</name>
        <dbReference type="ChEBI" id="CHEBI:30616"/>
    </ligand>
</feature>
<feature type="binding site" evidence="1">
    <location>
        <position position="309"/>
    </location>
    <ligand>
        <name>ADP</name>
        <dbReference type="ChEBI" id="CHEBI:456216"/>
    </ligand>
</feature>
<feature type="binding site" evidence="1">
    <location>
        <position position="309"/>
    </location>
    <ligand>
        <name>ATP</name>
        <dbReference type="ChEBI" id="CHEBI:30616"/>
    </ligand>
</feature>
<feature type="binding site" evidence="1">
    <location>
        <position position="313"/>
    </location>
    <ligand>
        <name>ATP</name>
        <dbReference type="ChEBI" id="CHEBI:30616"/>
    </ligand>
</feature>
<feature type="binding site" evidence="1">
    <location>
        <position position="410"/>
    </location>
    <ligand>
        <name>ADP</name>
        <dbReference type="ChEBI" id="CHEBI:456216"/>
    </ligand>
</feature>
<feature type="binding site" evidence="1">
    <location>
        <position position="410"/>
    </location>
    <ligand>
        <name>ATP</name>
        <dbReference type="ChEBI" id="CHEBI:30616"/>
    </ligand>
</feature>
<feature type="binding site" evidence="1">
    <location>
        <position position="414"/>
    </location>
    <ligand>
        <name>ADP</name>
        <dbReference type="ChEBI" id="CHEBI:456216"/>
    </ligand>
</feature>
<feature type="modified residue" description="Phosphohistidine; by HPr" evidence="1">
    <location>
        <position position="230"/>
    </location>
</feature>
<comment type="function">
    <text evidence="1">Key enzyme in the regulation of glycerol uptake and metabolism. Catalyzes the phosphorylation of glycerol to yield sn-glycerol 3-phosphate.</text>
</comment>
<comment type="catalytic activity">
    <reaction evidence="1">
        <text>glycerol + ATP = sn-glycerol 3-phosphate + ADP + H(+)</text>
        <dbReference type="Rhea" id="RHEA:21644"/>
        <dbReference type="ChEBI" id="CHEBI:15378"/>
        <dbReference type="ChEBI" id="CHEBI:17754"/>
        <dbReference type="ChEBI" id="CHEBI:30616"/>
        <dbReference type="ChEBI" id="CHEBI:57597"/>
        <dbReference type="ChEBI" id="CHEBI:456216"/>
        <dbReference type="EC" id="2.7.1.30"/>
    </reaction>
</comment>
<comment type="activity regulation">
    <text evidence="1">Activated by phosphorylation and inhibited by fructose 1,6-bisphosphate (FBP).</text>
</comment>
<comment type="pathway">
    <text evidence="1">Polyol metabolism; glycerol degradation via glycerol kinase pathway; sn-glycerol 3-phosphate from glycerol: step 1/1.</text>
</comment>
<comment type="subunit">
    <text evidence="1">Homotetramer and homodimer (in equilibrium).</text>
</comment>
<comment type="PTM">
    <text evidence="1">The phosphoenolpyruvate-dependent sugar phosphotransferase system (PTS), including enzyme I, and histidine-containing protein (HPr) are required for the phosphorylation, which leads to the activation of the enzyme.</text>
</comment>
<comment type="similarity">
    <text evidence="1">Belongs to the FGGY kinase family.</text>
</comment>
<keyword id="KW-0067">ATP-binding</keyword>
<keyword id="KW-0319">Glycerol metabolism</keyword>
<keyword id="KW-0418">Kinase</keyword>
<keyword id="KW-0547">Nucleotide-binding</keyword>
<keyword id="KW-0597">Phosphoprotein</keyword>
<keyword id="KW-1185">Reference proteome</keyword>
<keyword id="KW-0808">Transferase</keyword>
<reference key="1">
    <citation type="journal article" date="2003" name="Nature">
        <title>Genome sequence of Bacillus cereus and comparative analysis with Bacillus anthracis.</title>
        <authorList>
            <person name="Ivanova N."/>
            <person name="Sorokin A."/>
            <person name="Anderson I."/>
            <person name="Galleron N."/>
            <person name="Candelon B."/>
            <person name="Kapatral V."/>
            <person name="Bhattacharyya A."/>
            <person name="Reznik G."/>
            <person name="Mikhailova N."/>
            <person name="Lapidus A."/>
            <person name="Chu L."/>
            <person name="Mazur M."/>
            <person name="Goltsman E."/>
            <person name="Larsen N."/>
            <person name="D'Souza M."/>
            <person name="Walunas T."/>
            <person name="Grechkin Y."/>
            <person name="Pusch G."/>
            <person name="Haselkorn R."/>
            <person name="Fonstein M."/>
            <person name="Ehrlich S.D."/>
            <person name="Overbeek R."/>
            <person name="Kyrpides N.C."/>
        </authorList>
    </citation>
    <scope>NUCLEOTIDE SEQUENCE [LARGE SCALE GENOMIC DNA]</scope>
    <source>
        <strain>ATCC 14579 / DSM 31 / CCUG 7414 / JCM 2152 / NBRC 15305 / NCIMB 9373 / NCTC 2599 / NRRL B-3711</strain>
    </source>
</reference>
<evidence type="ECO:0000255" key="1">
    <source>
        <dbReference type="HAMAP-Rule" id="MF_00186"/>
    </source>
</evidence>
<accession>Q81GZ2</accession>
<protein>
    <recommendedName>
        <fullName evidence="1">Glycerol kinase</fullName>
        <ecNumber evidence="1">2.7.1.30</ecNumber>
    </recommendedName>
    <alternativeName>
        <fullName evidence="1">ATP:glycerol 3-phosphotransferase</fullName>
    </alternativeName>
    <alternativeName>
        <fullName evidence="1">Glycerokinase</fullName>
        <shortName evidence="1">GK</shortName>
    </alternativeName>
</protein>
<organism>
    <name type="scientific">Bacillus cereus (strain ATCC 14579 / DSM 31 / CCUG 7414 / JCM 2152 / NBRC 15305 / NCIMB 9373 / NCTC 2599 / NRRL B-3711)</name>
    <dbReference type="NCBI Taxonomy" id="226900"/>
    <lineage>
        <taxon>Bacteria</taxon>
        <taxon>Bacillati</taxon>
        <taxon>Bacillota</taxon>
        <taxon>Bacilli</taxon>
        <taxon>Bacillales</taxon>
        <taxon>Bacillaceae</taxon>
        <taxon>Bacillus</taxon>
        <taxon>Bacillus cereus group</taxon>
    </lineage>
</organism>
<proteinExistence type="inferred from homology"/>
<sequence length="496" mass="55118">MKKYILSLDQGTTSSRAILFNKKGEIVHSAQKEFTQHFPKPGWVEHNAQEIWGSILAVIATCLSEADVKPEQIAGIGITNQRETTVVWDKTTSKPIYNAIVWQSRQTAEICDELKEKGYSEMVREKTGLLIDAYFSGTKVKWILDNVEGAREKAENGDLLFGTIDSWLVWKLSGGKAHVTDYSNASRTLMFNIHDLQWDDELLEMLTVPKSMLPEVRPSSEIYGETIDYHFFGQNVPIAGVAGDQQAALFGQACFGEGMAKNTYGTGCFMLMNTGEKAVASEHGLLTTIAWGIDGKVNYALEGSIFVAGSAIQWLRDGMRMFKDASESEVYASRVESTDGVYVVPAFVGLGTPYWDSEVRGAMFGVTRGTTKEHFIRATLESLAYQTKDVLCAMEADSGIELKTLRVDGGAVKNNFLMKFQSDILDVPVERPVINETTALGAAYLAGLAVGYWKNQDEIKEQWHMDKRFEPTMEAKTSEELYAGWKKAIEATKAFK</sequence>